<reference key="1">
    <citation type="journal article" date="2004" name="Proc. Natl. Acad. Sci. U.S.A.">
        <title>Insights into the evolution of Yersinia pestis through whole-genome comparison with Yersinia pseudotuberculosis.</title>
        <authorList>
            <person name="Chain P.S.G."/>
            <person name="Carniel E."/>
            <person name="Larimer F.W."/>
            <person name="Lamerdin J."/>
            <person name="Stoutland P.O."/>
            <person name="Regala W.M."/>
            <person name="Georgescu A.M."/>
            <person name="Vergez L.M."/>
            <person name="Land M.L."/>
            <person name="Motin V.L."/>
            <person name="Brubaker R.R."/>
            <person name="Fowler J."/>
            <person name="Hinnebusch J."/>
            <person name="Marceau M."/>
            <person name="Medigue C."/>
            <person name="Simonet M."/>
            <person name="Chenal-Francisque V."/>
            <person name="Souza B."/>
            <person name="Dacheux D."/>
            <person name="Elliott J.M."/>
            <person name="Derbise A."/>
            <person name="Hauser L.J."/>
            <person name="Garcia E."/>
        </authorList>
    </citation>
    <scope>NUCLEOTIDE SEQUENCE [LARGE SCALE GENOMIC DNA]</scope>
    <source>
        <strain>IP32953</strain>
    </source>
</reference>
<keyword id="KW-0067">ATP-binding</keyword>
<keyword id="KW-0460">Magnesium</keyword>
<keyword id="KW-0511">Multifunctional enzyme</keyword>
<keyword id="KW-0547">Nucleotide-binding</keyword>
<keyword id="KW-0548">Nucleotidyltransferase</keyword>
<keyword id="KW-0808">Transferase</keyword>
<organism>
    <name type="scientific">Yersinia pseudotuberculosis serotype I (strain IP32953)</name>
    <dbReference type="NCBI Taxonomy" id="273123"/>
    <lineage>
        <taxon>Bacteria</taxon>
        <taxon>Pseudomonadati</taxon>
        <taxon>Pseudomonadota</taxon>
        <taxon>Gammaproteobacteria</taxon>
        <taxon>Enterobacterales</taxon>
        <taxon>Yersiniaceae</taxon>
        <taxon>Yersinia</taxon>
    </lineage>
</organism>
<proteinExistence type="inferred from homology"/>
<gene>
    <name evidence="1" type="primary">glnE</name>
    <name type="ordered locus">YPTB3408</name>
</gene>
<sequence>MLPLPSELQIQAQSIKQRFSELPAPPDLRDEDIAVLALSDFVSDMLLIHPQWLEELHQQPPQPQEWQYYSQWLSQALAGVQDEAALLTALRLFRRRVMVRIAWSQVLQTSGTAETLQQLSTLAESMIIAARDWLYQVCCRELGTPCNRQGVPQPLLILGMGKLGGGELNFSSDIDLIFAYPENGQTQGGRRELDNAQFFTRLGQRLIKALDQHTIDGFVYRVDMRLRPFGDSGPLVLSFAALEDYYQEQGRDWERYAMVKARLMGGADDPYSQELRQMLRPFVFRRYIDFSVIQSLRNMKGMIAREVRRRGLKDNIKLGAGGIREIEFITQVFQLIRGGREPRLQERALLPTLQAVAELGLLPEQQVADLSGSYLFLRRLENLLQAIADEQTQTLPNDPLNQARLAWGMGYADWAAMSTALENHMQAVRVVFDDLIGDETPDIGEDPSHGLYKSLWQDVLEESDLAPLTPHLEEAARRQLLATISGFRHDVDKRTIGPRGREVLDQLMPRLFAEVCPRPDANVALSRLILLLLSIVTRTTYLELLVEYHAALKHVIRLCSASPMVASQLARYPLLLDELLDPQSLYQPLAPSAYRDELRQYLLRVPEDDEEQQLEALRQFKQAQQLRIAAGDITEALPVMKVSDHLTYLAEAIIDAVIQQAWNQMVARYGQPSHLQQSEGRGFAVIGYGKLGGWELGYSSDLDLVFLLDCPLDVMTDGDRSIDGRQFYLRLAQRIMHLFSTRTSSGILYEVDARLRPSGEAGMLVSTIEAFADYQRNEAWTWEHQALVRARIVYGSPKLHQQFDAIRQQILCRHREDPQLQQEVREMREKMRNHLGSKQRDIFDIKADAGGITDIEFIAQYLVLRYAASEPRLTRWSDNVRIFESMAHYDIMSPEEAAALTRAYVTMRDEIHHLALQEQSSKVAADSFIAEREQVAASWHKWLAANDANVS</sequence>
<evidence type="ECO:0000255" key="1">
    <source>
        <dbReference type="HAMAP-Rule" id="MF_00802"/>
    </source>
</evidence>
<dbReference type="EC" id="2.7.7.89" evidence="1"/>
<dbReference type="EC" id="2.7.7.42" evidence="1"/>
<dbReference type="EMBL" id="BX936398">
    <property type="protein sequence ID" value="CAH22646.1"/>
    <property type="molecule type" value="Genomic_DNA"/>
</dbReference>
<dbReference type="RefSeq" id="WP_002212194.1">
    <property type="nucleotide sequence ID" value="NZ_CP009712.1"/>
</dbReference>
<dbReference type="SMR" id="Q665V2"/>
<dbReference type="GeneID" id="57973971"/>
<dbReference type="KEGG" id="ypo:BZ17_3200"/>
<dbReference type="KEGG" id="yps:YPTB3408"/>
<dbReference type="PATRIC" id="fig|273123.14.peg.3351"/>
<dbReference type="Proteomes" id="UP000001011">
    <property type="component" value="Chromosome"/>
</dbReference>
<dbReference type="GO" id="GO:0005829">
    <property type="term" value="C:cytosol"/>
    <property type="evidence" value="ECO:0007669"/>
    <property type="project" value="TreeGrafter"/>
</dbReference>
<dbReference type="GO" id="GO:0008882">
    <property type="term" value="F:[glutamate-ammonia-ligase] adenylyltransferase activity"/>
    <property type="evidence" value="ECO:0007669"/>
    <property type="project" value="UniProtKB-UniRule"/>
</dbReference>
<dbReference type="GO" id="GO:0047388">
    <property type="term" value="F:[glutamine synthetase]-adenylyl-L-tyrosine phosphorylase activity"/>
    <property type="evidence" value="ECO:0007669"/>
    <property type="project" value="UniProtKB-EC"/>
</dbReference>
<dbReference type="GO" id="GO:0005524">
    <property type="term" value="F:ATP binding"/>
    <property type="evidence" value="ECO:0007669"/>
    <property type="project" value="UniProtKB-UniRule"/>
</dbReference>
<dbReference type="GO" id="GO:0000287">
    <property type="term" value="F:magnesium ion binding"/>
    <property type="evidence" value="ECO:0007669"/>
    <property type="project" value="UniProtKB-UniRule"/>
</dbReference>
<dbReference type="GO" id="GO:0000820">
    <property type="term" value="P:regulation of glutamine family amino acid metabolic process"/>
    <property type="evidence" value="ECO:0007669"/>
    <property type="project" value="UniProtKB-UniRule"/>
</dbReference>
<dbReference type="CDD" id="cd05401">
    <property type="entry name" value="NT_GlnE_GlnD_like"/>
    <property type="match status" value="2"/>
</dbReference>
<dbReference type="FunFam" id="1.10.4050.10:FF:000001">
    <property type="entry name" value="Bifunctional glutamine synthetase adenylyltransferase/adenylyl-removing enzyme"/>
    <property type="match status" value="1"/>
</dbReference>
<dbReference type="FunFam" id="1.20.120.1510:FF:000001">
    <property type="entry name" value="Bifunctional glutamine synthetase adenylyltransferase/adenylyl-removing enzyme"/>
    <property type="match status" value="1"/>
</dbReference>
<dbReference type="FunFam" id="1.20.120.330:FF:000005">
    <property type="entry name" value="Bifunctional glutamine synthetase adenylyltransferase/adenylyl-removing enzyme"/>
    <property type="match status" value="1"/>
</dbReference>
<dbReference type="FunFam" id="1.20.120.330:FF:000008">
    <property type="entry name" value="Bifunctional glutamine synthetase adenylyltransferase/adenylyl-removing enzyme"/>
    <property type="match status" value="1"/>
</dbReference>
<dbReference type="FunFam" id="3.30.460.10:FF:000009">
    <property type="entry name" value="Bifunctional glutamine synthetase adenylyltransferase/adenylyl-removing enzyme"/>
    <property type="match status" value="1"/>
</dbReference>
<dbReference type="FunFam" id="3.30.460.10:FF:000014">
    <property type="entry name" value="Bifunctional glutamine synthetase adenylyltransferase/adenylyl-removing enzyme"/>
    <property type="match status" value="1"/>
</dbReference>
<dbReference type="Gene3D" id="1.20.120.1510">
    <property type="match status" value="1"/>
</dbReference>
<dbReference type="Gene3D" id="3.30.460.10">
    <property type="entry name" value="Beta Polymerase, domain 2"/>
    <property type="match status" value="2"/>
</dbReference>
<dbReference type="Gene3D" id="1.10.4050.10">
    <property type="entry name" value="Glutamine synthase adenylyltransferase GlnE"/>
    <property type="match status" value="1"/>
</dbReference>
<dbReference type="Gene3D" id="1.20.120.330">
    <property type="entry name" value="Nucleotidyltransferases domain 2"/>
    <property type="match status" value="2"/>
</dbReference>
<dbReference type="HAMAP" id="MF_00802">
    <property type="entry name" value="GlnE"/>
    <property type="match status" value="1"/>
</dbReference>
<dbReference type="InterPro" id="IPR023057">
    <property type="entry name" value="GlnE"/>
</dbReference>
<dbReference type="InterPro" id="IPR005190">
    <property type="entry name" value="GlnE_rpt_dom"/>
</dbReference>
<dbReference type="InterPro" id="IPR043519">
    <property type="entry name" value="NT_sf"/>
</dbReference>
<dbReference type="InterPro" id="IPR013546">
    <property type="entry name" value="PII_UdlTrfase/GS_AdlTrfase"/>
</dbReference>
<dbReference type="NCBIfam" id="NF008292">
    <property type="entry name" value="PRK11072.1"/>
    <property type="match status" value="1"/>
</dbReference>
<dbReference type="PANTHER" id="PTHR30621:SF0">
    <property type="entry name" value="BIFUNCTIONAL GLUTAMINE SYNTHETASE ADENYLYLTRANSFERASE_ADENYLYL-REMOVING ENZYME"/>
    <property type="match status" value="1"/>
</dbReference>
<dbReference type="PANTHER" id="PTHR30621">
    <property type="entry name" value="GLUTAMINE SYNTHETASE ADENYLYLTRANSFERASE"/>
    <property type="match status" value="1"/>
</dbReference>
<dbReference type="Pfam" id="PF08335">
    <property type="entry name" value="GlnD_UR_UTase"/>
    <property type="match status" value="2"/>
</dbReference>
<dbReference type="Pfam" id="PF03710">
    <property type="entry name" value="GlnE"/>
    <property type="match status" value="2"/>
</dbReference>
<dbReference type="SUPFAM" id="SSF81301">
    <property type="entry name" value="Nucleotidyltransferase"/>
    <property type="match status" value="2"/>
</dbReference>
<dbReference type="SUPFAM" id="SSF81593">
    <property type="entry name" value="Nucleotidyltransferase substrate binding subunit/domain"/>
    <property type="match status" value="2"/>
</dbReference>
<protein>
    <recommendedName>
        <fullName evidence="1">Bifunctional glutamine synthetase adenylyltransferase/adenylyl-removing enzyme</fullName>
    </recommendedName>
    <alternativeName>
        <fullName evidence="1">ATP:glutamine synthetase adenylyltransferase</fullName>
    </alternativeName>
    <alternativeName>
        <fullName evidence="1">ATase</fullName>
    </alternativeName>
    <domain>
        <recommendedName>
            <fullName evidence="1">Glutamine synthetase adenylyl-L-tyrosine phosphorylase</fullName>
            <ecNumber evidence="1">2.7.7.89</ecNumber>
        </recommendedName>
        <alternativeName>
            <fullName evidence="1">Adenylyl removase</fullName>
            <shortName evidence="1">AR</shortName>
            <shortName evidence="1">AT-N</shortName>
        </alternativeName>
    </domain>
    <domain>
        <recommendedName>
            <fullName evidence="1">Glutamine synthetase adenylyl transferase</fullName>
            <ecNumber evidence="1">2.7.7.42</ecNumber>
        </recommendedName>
        <alternativeName>
            <fullName evidence="1">Adenylyl transferase</fullName>
            <shortName evidence="1">AT</shortName>
            <shortName evidence="1">AT-C</shortName>
        </alternativeName>
    </domain>
</protein>
<accession>Q665V2</accession>
<comment type="function">
    <text evidence="1">Involved in the regulation of glutamine synthetase GlnA, a key enzyme in the process to assimilate ammonia. When cellular nitrogen levels are high, the C-terminal adenylyl transferase (AT) inactivates GlnA by covalent transfer of an adenylyl group from ATP to specific tyrosine residue of GlnA, thus reducing its activity. Conversely, when nitrogen levels are low, the N-terminal adenylyl removase (AR) activates GlnA by removing the adenylyl group by phosphorolysis, increasing its activity. The regulatory region of GlnE binds the signal transduction protein PII (GlnB) which indicates the nitrogen status of the cell.</text>
</comment>
<comment type="catalytic activity">
    <reaction evidence="1">
        <text>[glutamine synthetase]-O(4)-(5'-adenylyl)-L-tyrosine + phosphate = [glutamine synthetase]-L-tyrosine + ADP</text>
        <dbReference type="Rhea" id="RHEA:43716"/>
        <dbReference type="Rhea" id="RHEA-COMP:10660"/>
        <dbReference type="Rhea" id="RHEA-COMP:10661"/>
        <dbReference type="ChEBI" id="CHEBI:43474"/>
        <dbReference type="ChEBI" id="CHEBI:46858"/>
        <dbReference type="ChEBI" id="CHEBI:83624"/>
        <dbReference type="ChEBI" id="CHEBI:456216"/>
        <dbReference type="EC" id="2.7.7.89"/>
    </reaction>
</comment>
<comment type="catalytic activity">
    <reaction evidence="1">
        <text>[glutamine synthetase]-L-tyrosine + ATP = [glutamine synthetase]-O(4)-(5'-adenylyl)-L-tyrosine + diphosphate</text>
        <dbReference type="Rhea" id="RHEA:18589"/>
        <dbReference type="Rhea" id="RHEA-COMP:10660"/>
        <dbReference type="Rhea" id="RHEA-COMP:10661"/>
        <dbReference type="ChEBI" id="CHEBI:30616"/>
        <dbReference type="ChEBI" id="CHEBI:33019"/>
        <dbReference type="ChEBI" id="CHEBI:46858"/>
        <dbReference type="ChEBI" id="CHEBI:83624"/>
        <dbReference type="EC" id="2.7.7.42"/>
    </reaction>
</comment>
<comment type="cofactor">
    <cofactor evidence="1">
        <name>Mg(2+)</name>
        <dbReference type="ChEBI" id="CHEBI:18420"/>
    </cofactor>
</comment>
<comment type="similarity">
    <text evidence="1">Belongs to the GlnE family.</text>
</comment>
<feature type="chain" id="PRO_0000209288" description="Bifunctional glutamine synthetase adenylyltransferase/adenylyl-removing enzyme">
    <location>
        <begin position="1"/>
        <end position="951"/>
    </location>
</feature>
<feature type="region of interest" description="Adenylyl removase" evidence="1">
    <location>
        <begin position="1"/>
        <end position="440"/>
    </location>
</feature>
<feature type="region of interest" description="Adenylyl transferase" evidence="1">
    <location>
        <begin position="449"/>
        <end position="951"/>
    </location>
</feature>
<name>GLNE_YERPS</name>